<name>RPR1A_MOUSE</name>
<protein>
    <recommendedName>
        <fullName>Regulation of nuclear pre-mRNA domain-containing protein 1A</fullName>
    </recommendedName>
    <alternativeName>
        <fullName>Cyclin-dependent kinase inhibitor 2B-related protein</fullName>
    </alternativeName>
    <alternativeName>
        <fullName>p15INK4B-related protein</fullName>
    </alternativeName>
</protein>
<comment type="function">
    <text evidence="1">Interacts with phosphorylated C-terminal heptapeptide repeat domain (CTD) of the largest RNA polymerase II subunit POLR2A, and participates in dephosphorylation of the CTD by RPAP2. May act as a negative regulator of cyclin-D1 (CCND1) and cyclin-E (CCNE1) in the cell cycle.</text>
</comment>
<comment type="subunit">
    <text evidence="1">May form a heterodimer with RPRD1B. Associates with the RNA polymerase II subunit POLR2A (via CTD phosphorylated at 'Ser-2' and 'Ser-7' of the heptad repeats).</text>
</comment>
<comment type="subcellular location">
    <subcellularLocation>
        <location evidence="1">Nucleus</location>
    </subcellularLocation>
</comment>
<comment type="similarity">
    <text evidence="4">Belongs to the UPF0400 (RTT103) family.</text>
</comment>
<comment type="sequence caution" evidence="4">
    <conflict type="erroneous initiation">
        <sequence resource="EMBL-CDS" id="BAD90282"/>
    </conflict>
</comment>
<evidence type="ECO:0000250" key="1">
    <source>
        <dbReference type="UniProtKB" id="Q96P16"/>
    </source>
</evidence>
<evidence type="ECO:0000255" key="2"/>
<evidence type="ECO:0000255" key="3">
    <source>
        <dbReference type="PROSITE-ProRule" id="PRU00724"/>
    </source>
</evidence>
<evidence type="ECO:0000305" key="4"/>
<sequence length="312" mass="35701">MSAFSEAALEKKLSELSNSQQSVQTLSLWLIHHRKHSRPIVTVWERELRKAKPNRKLTFLYLANDVIQNSKRKGPEFTKDFAPVIVEAFKHVSSETDESCKKHLGRVLSIWEERSVYENDVLEQLKHALYGDKKARKRTYEQIKVDENENCSSLGSPSEPPQTLDLVRALQDLENAASGDAAVHQRIASLPVEVQEVSLLEKITDKESGERLSKMVEDACMLLADYNGRLAAEIDDRKQLTRMLADFLRCQKEALAEKEHKLEEYKRKLARVSLVRKELRARIQSLPDLSRLPNVTGSHMHLPFAGDIYSED</sequence>
<proteinExistence type="evidence at protein level"/>
<dbReference type="EMBL" id="AK220475">
    <property type="protein sequence ID" value="BAD90282.1"/>
    <property type="status" value="ALT_INIT"/>
    <property type="molecule type" value="mRNA"/>
</dbReference>
<dbReference type="EMBL" id="BC021395">
    <property type="protein sequence ID" value="AAH21395.1"/>
    <property type="molecule type" value="mRNA"/>
</dbReference>
<dbReference type="EMBL" id="BC023084">
    <property type="protein sequence ID" value="AAH23084.1"/>
    <property type="molecule type" value="mRNA"/>
</dbReference>
<dbReference type="CCDS" id="CCDS29102.1"/>
<dbReference type="RefSeq" id="NP_001347736.1">
    <property type="nucleotide sequence ID" value="NM_001360807.1"/>
</dbReference>
<dbReference type="RefSeq" id="NP_659110.1">
    <property type="nucleotide sequence ID" value="NM_144861.2"/>
</dbReference>
<dbReference type="RefSeq" id="XP_006525887.1">
    <property type="nucleotide sequence ID" value="XM_006525824.3"/>
</dbReference>
<dbReference type="RefSeq" id="XP_006525888.1">
    <property type="nucleotide sequence ID" value="XM_006525825.5"/>
</dbReference>
<dbReference type="SMR" id="Q8VDS4"/>
<dbReference type="BioGRID" id="230378">
    <property type="interactions" value="5"/>
</dbReference>
<dbReference type="FunCoup" id="Q8VDS4">
    <property type="interactions" value="3449"/>
</dbReference>
<dbReference type="STRING" id="10090.ENSMUSP00000043618"/>
<dbReference type="iPTMnet" id="Q8VDS4"/>
<dbReference type="PhosphoSitePlus" id="Q8VDS4"/>
<dbReference type="SwissPalm" id="Q8VDS4"/>
<dbReference type="jPOST" id="Q8VDS4"/>
<dbReference type="PaxDb" id="10090-ENSMUSP00000043618"/>
<dbReference type="PeptideAtlas" id="Q8VDS4"/>
<dbReference type="ProteomicsDB" id="299947"/>
<dbReference type="Pumba" id="Q8VDS4"/>
<dbReference type="Antibodypedia" id="22307">
    <property type="antibodies" value="124 antibodies from 25 providers"/>
</dbReference>
<dbReference type="DNASU" id="225283"/>
<dbReference type="Ensembl" id="ENSMUST00000046206.5">
    <property type="protein sequence ID" value="ENSMUSP00000043618.4"/>
    <property type="gene ID" value="ENSMUSG00000040446.5"/>
</dbReference>
<dbReference type="GeneID" id="225283"/>
<dbReference type="KEGG" id="mmu:225283"/>
<dbReference type="UCSC" id="uc008egu.1">
    <property type="organism name" value="mouse"/>
</dbReference>
<dbReference type="AGR" id="MGI:2385066"/>
<dbReference type="CTD" id="55197"/>
<dbReference type="MGI" id="MGI:2385066">
    <property type="gene designation" value="Rprd1a"/>
</dbReference>
<dbReference type="VEuPathDB" id="HostDB:ENSMUSG00000040446"/>
<dbReference type="eggNOG" id="KOG2669">
    <property type="taxonomic scope" value="Eukaryota"/>
</dbReference>
<dbReference type="GeneTree" id="ENSGT00950000183094"/>
<dbReference type="HOGENOM" id="CLU_055523_1_0_1"/>
<dbReference type="InParanoid" id="Q8VDS4"/>
<dbReference type="OMA" id="LWMQRLK"/>
<dbReference type="OrthoDB" id="10069473at2759"/>
<dbReference type="PhylomeDB" id="Q8VDS4"/>
<dbReference type="TreeFam" id="TF320926"/>
<dbReference type="Reactome" id="R-MMU-6807505">
    <property type="pathway name" value="RNA polymerase II transcribes snRNA genes"/>
</dbReference>
<dbReference type="BioGRID-ORCS" id="225283">
    <property type="hits" value="1 hit in 76 CRISPR screens"/>
</dbReference>
<dbReference type="ChiTaRS" id="Rprd1a">
    <property type="organism name" value="mouse"/>
</dbReference>
<dbReference type="PRO" id="PR:Q8VDS4"/>
<dbReference type="Proteomes" id="UP000000589">
    <property type="component" value="Chromosome 18"/>
</dbReference>
<dbReference type="RNAct" id="Q8VDS4">
    <property type="molecule type" value="protein"/>
</dbReference>
<dbReference type="Bgee" id="ENSMUSG00000040446">
    <property type="expression patterns" value="Expressed in olfactory tubercle and 255 other cell types or tissues"/>
</dbReference>
<dbReference type="GO" id="GO:0005634">
    <property type="term" value="C:nucleus"/>
    <property type="evidence" value="ECO:0000250"/>
    <property type="project" value="UniProtKB"/>
</dbReference>
<dbReference type="GO" id="GO:0097550">
    <property type="term" value="C:transcription preinitiation complex"/>
    <property type="evidence" value="ECO:0000250"/>
    <property type="project" value="UniProtKB"/>
</dbReference>
<dbReference type="GO" id="GO:0099122">
    <property type="term" value="F:RNA polymerase II C-terminal domain binding"/>
    <property type="evidence" value="ECO:0007669"/>
    <property type="project" value="InterPro"/>
</dbReference>
<dbReference type="GO" id="GO:0001111">
    <property type="term" value="P:RNA polymerase II promoter clearance"/>
    <property type="evidence" value="ECO:0000250"/>
    <property type="project" value="UniProtKB"/>
</dbReference>
<dbReference type="CDD" id="cd17011">
    <property type="entry name" value="CID_RPRD1A"/>
    <property type="match status" value="1"/>
</dbReference>
<dbReference type="FunFam" id="1.25.40.90:FF:000007">
    <property type="entry name" value="Regulation of nuclear pre-mRNA domain-containing protein 1B"/>
    <property type="match status" value="1"/>
</dbReference>
<dbReference type="Gene3D" id="1.25.40.90">
    <property type="match status" value="1"/>
</dbReference>
<dbReference type="Gene3D" id="6.10.250.2560">
    <property type="match status" value="1"/>
</dbReference>
<dbReference type="InterPro" id="IPR006569">
    <property type="entry name" value="CID_dom"/>
</dbReference>
<dbReference type="InterPro" id="IPR008942">
    <property type="entry name" value="ENTH_VHS"/>
</dbReference>
<dbReference type="InterPro" id="IPR032337">
    <property type="entry name" value="RPRD1A/B_C"/>
</dbReference>
<dbReference type="InterPro" id="IPR047884">
    <property type="entry name" value="RPRD1A_CID"/>
</dbReference>
<dbReference type="PANTHER" id="PTHR12460">
    <property type="entry name" value="CYCLIN-DEPENDENT KINASE INHIBITOR-RELATED PROTEIN"/>
    <property type="match status" value="1"/>
</dbReference>
<dbReference type="PANTHER" id="PTHR12460:SF2">
    <property type="entry name" value="REGULATION OF NUCLEAR PRE-MRNA DOMAIN-CONTAINING PROTEIN 1A"/>
    <property type="match status" value="1"/>
</dbReference>
<dbReference type="Pfam" id="PF04818">
    <property type="entry name" value="CID"/>
    <property type="match status" value="1"/>
</dbReference>
<dbReference type="Pfam" id="PF16566">
    <property type="entry name" value="CREPT"/>
    <property type="match status" value="1"/>
</dbReference>
<dbReference type="SMART" id="SM00582">
    <property type="entry name" value="RPR"/>
    <property type="match status" value="1"/>
</dbReference>
<dbReference type="SUPFAM" id="SSF48464">
    <property type="entry name" value="ENTH/VHS domain"/>
    <property type="match status" value="1"/>
</dbReference>
<dbReference type="PROSITE" id="PS51391">
    <property type="entry name" value="CID"/>
    <property type="match status" value="1"/>
</dbReference>
<gene>
    <name type="primary">Rprd1a</name>
    <name type="synonym">Kiaa4077</name>
    <name type="synonym">P15rs</name>
</gene>
<feature type="initiator methionine" description="Removed" evidence="1">
    <location>
        <position position="1"/>
    </location>
</feature>
<feature type="chain" id="PRO_0000311345" description="Regulation of nuclear pre-mRNA domain-containing protein 1A">
    <location>
        <begin position="2"/>
        <end position="312"/>
    </location>
</feature>
<feature type="domain" description="CID" evidence="3">
    <location>
        <begin position="2"/>
        <end position="133"/>
    </location>
</feature>
<feature type="coiled-coil region" evidence="2">
    <location>
        <begin position="244"/>
        <end position="286"/>
    </location>
</feature>
<feature type="modified residue" description="N-acetylserine" evidence="1">
    <location>
        <position position="2"/>
    </location>
</feature>
<feature type="modified residue" description="Phosphoserine" evidence="1">
    <location>
        <position position="153"/>
    </location>
</feature>
<feature type="modified residue" description="Phosphoserine" evidence="1">
    <location>
        <position position="156"/>
    </location>
</feature>
<feature type="modified residue" description="Phosphoserine" evidence="1">
    <location>
        <position position="285"/>
    </location>
</feature>
<accession>Q8VDS4</accession>
<accession>Q5DTP5</accession>
<organism>
    <name type="scientific">Mus musculus</name>
    <name type="common">Mouse</name>
    <dbReference type="NCBI Taxonomy" id="10090"/>
    <lineage>
        <taxon>Eukaryota</taxon>
        <taxon>Metazoa</taxon>
        <taxon>Chordata</taxon>
        <taxon>Craniata</taxon>
        <taxon>Vertebrata</taxon>
        <taxon>Euteleostomi</taxon>
        <taxon>Mammalia</taxon>
        <taxon>Eutheria</taxon>
        <taxon>Euarchontoglires</taxon>
        <taxon>Glires</taxon>
        <taxon>Rodentia</taxon>
        <taxon>Myomorpha</taxon>
        <taxon>Muroidea</taxon>
        <taxon>Muridae</taxon>
        <taxon>Murinae</taxon>
        <taxon>Mus</taxon>
        <taxon>Mus</taxon>
    </lineage>
</organism>
<reference key="1">
    <citation type="submission" date="2005-02" db="EMBL/GenBank/DDBJ databases">
        <title>Prediction of the coding sequences of mouse homologues of KIAA gene. The complete nucleotide sequences of mouse KIAA-homologous cDNAs identified by screening of terminal sequences of cDNA clones randomly sampled from size-fractionated libraries.</title>
        <authorList>
            <person name="Okazaki N."/>
            <person name="Kikuno R.F."/>
            <person name="Ohara R."/>
            <person name="Inamoto S."/>
            <person name="Nagase T."/>
            <person name="Ohara O."/>
            <person name="Koga H."/>
        </authorList>
    </citation>
    <scope>NUCLEOTIDE SEQUENCE [LARGE SCALE MRNA]</scope>
    <source>
        <tissue>Fetal brain</tissue>
    </source>
</reference>
<reference key="2">
    <citation type="journal article" date="2004" name="Genome Res.">
        <title>The status, quality, and expansion of the NIH full-length cDNA project: the Mammalian Gene Collection (MGC).</title>
        <authorList>
            <consortium name="The MGC Project Team"/>
        </authorList>
    </citation>
    <scope>NUCLEOTIDE SEQUENCE [LARGE SCALE MRNA]</scope>
    <source>
        <strain>Czech II</strain>
        <strain>FVB/N</strain>
        <tissue>Mammary tumor</tissue>
    </source>
</reference>
<reference key="3">
    <citation type="journal article" date="2010" name="Cell">
        <title>A tissue-specific atlas of mouse protein phosphorylation and expression.</title>
        <authorList>
            <person name="Huttlin E.L."/>
            <person name="Jedrychowski M.P."/>
            <person name="Elias J.E."/>
            <person name="Goswami T."/>
            <person name="Rad R."/>
            <person name="Beausoleil S.A."/>
            <person name="Villen J."/>
            <person name="Haas W."/>
            <person name="Sowa M.E."/>
            <person name="Gygi S.P."/>
        </authorList>
    </citation>
    <scope>IDENTIFICATION BY MASS SPECTROMETRY [LARGE SCALE ANALYSIS]</scope>
    <source>
        <tissue>Brain</tissue>
        <tissue>Testis</tissue>
    </source>
</reference>
<keyword id="KW-0007">Acetylation</keyword>
<keyword id="KW-0175">Coiled coil</keyword>
<keyword id="KW-0539">Nucleus</keyword>
<keyword id="KW-0597">Phosphoprotein</keyword>
<keyword id="KW-1185">Reference proteome</keyword>